<sequence>MSEMTPREIVSELDKHIIGQDNAKRSVAIALRNRWRRMQLNEELRHEVTPKNILMIGPTGVGKTEIARRLAKLANAPFIKVEATKFTEVGYVGKEVDSIIRDLTDAAVKMVRVQAIEKNRYRAEELAEERILDVLIPPAKNNWGQTEQQQEPSAARQAFRKKLREGQLDDKEIEIDLAAAPMGVEIMAPPGMEEMTSQLQSMFQNLGGQKQKARKLKIKDAMKLLIEEEAAKLVNPEELKQDAIDAVEQHGIVFIDEIDKICKRGESSGPDVSREGVQRDLLPLVEGCTVSTKHGMVKTDHILFIASGAFQIAKPSDLIPELQGRLPIRVELQALTTSDFERILTEPNASITVQYKALMATEGVNIEFTDSGIKRIAEAAWQVNESTENIGARRLHTVLERLMEEISYDASDLSGQTITIDADYVSKHLDALVADEDLSRFIL</sequence>
<feature type="chain" id="PRO_1000119105" description="ATP-dependent protease ATPase subunit HslU">
    <location>
        <begin position="1"/>
        <end position="443"/>
    </location>
</feature>
<feature type="binding site" evidence="1">
    <location>
        <position position="18"/>
    </location>
    <ligand>
        <name>ATP</name>
        <dbReference type="ChEBI" id="CHEBI:30616"/>
    </ligand>
</feature>
<feature type="binding site" evidence="1">
    <location>
        <begin position="60"/>
        <end position="65"/>
    </location>
    <ligand>
        <name>ATP</name>
        <dbReference type="ChEBI" id="CHEBI:30616"/>
    </ligand>
</feature>
<feature type="binding site" evidence="1">
    <location>
        <position position="256"/>
    </location>
    <ligand>
        <name>ATP</name>
        <dbReference type="ChEBI" id="CHEBI:30616"/>
    </ligand>
</feature>
<feature type="binding site" evidence="1">
    <location>
        <position position="321"/>
    </location>
    <ligand>
        <name>ATP</name>
        <dbReference type="ChEBI" id="CHEBI:30616"/>
    </ligand>
</feature>
<feature type="binding site" evidence="1">
    <location>
        <position position="393"/>
    </location>
    <ligand>
        <name>ATP</name>
        <dbReference type="ChEBI" id="CHEBI:30616"/>
    </ligand>
</feature>
<evidence type="ECO:0000255" key="1">
    <source>
        <dbReference type="HAMAP-Rule" id="MF_00249"/>
    </source>
</evidence>
<gene>
    <name evidence="1" type="primary">hslU</name>
    <name type="ordered locus">ECUMN_4461</name>
</gene>
<name>HSLU_ECOLU</name>
<dbReference type="EMBL" id="CU928163">
    <property type="protein sequence ID" value="CAR15587.1"/>
    <property type="molecule type" value="Genomic_DNA"/>
</dbReference>
<dbReference type="RefSeq" id="WP_001293344.1">
    <property type="nucleotide sequence ID" value="NC_011751.1"/>
</dbReference>
<dbReference type="RefSeq" id="YP_002415076.1">
    <property type="nucleotide sequence ID" value="NC_011751.1"/>
</dbReference>
<dbReference type="SMR" id="B7NFN0"/>
<dbReference type="STRING" id="585056.ECUMN_4461"/>
<dbReference type="KEGG" id="eum:ECUMN_4461"/>
<dbReference type="PATRIC" id="fig|585056.7.peg.4631"/>
<dbReference type="HOGENOM" id="CLU_033123_0_0_6"/>
<dbReference type="Proteomes" id="UP000007097">
    <property type="component" value="Chromosome"/>
</dbReference>
<dbReference type="GO" id="GO:0009376">
    <property type="term" value="C:HslUV protease complex"/>
    <property type="evidence" value="ECO:0007669"/>
    <property type="project" value="UniProtKB-UniRule"/>
</dbReference>
<dbReference type="GO" id="GO:0005524">
    <property type="term" value="F:ATP binding"/>
    <property type="evidence" value="ECO:0007669"/>
    <property type="project" value="UniProtKB-UniRule"/>
</dbReference>
<dbReference type="GO" id="GO:0016887">
    <property type="term" value="F:ATP hydrolysis activity"/>
    <property type="evidence" value="ECO:0007669"/>
    <property type="project" value="InterPro"/>
</dbReference>
<dbReference type="GO" id="GO:0008233">
    <property type="term" value="F:peptidase activity"/>
    <property type="evidence" value="ECO:0007669"/>
    <property type="project" value="InterPro"/>
</dbReference>
<dbReference type="GO" id="GO:0036402">
    <property type="term" value="F:proteasome-activating activity"/>
    <property type="evidence" value="ECO:0007669"/>
    <property type="project" value="UniProtKB-UniRule"/>
</dbReference>
<dbReference type="GO" id="GO:0043335">
    <property type="term" value="P:protein unfolding"/>
    <property type="evidence" value="ECO:0007669"/>
    <property type="project" value="UniProtKB-UniRule"/>
</dbReference>
<dbReference type="GO" id="GO:0051603">
    <property type="term" value="P:proteolysis involved in protein catabolic process"/>
    <property type="evidence" value="ECO:0007669"/>
    <property type="project" value="TreeGrafter"/>
</dbReference>
<dbReference type="CDD" id="cd19498">
    <property type="entry name" value="RecA-like_HslU"/>
    <property type="match status" value="1"/>
</dbReference>
<dbReference type="FunFam" id="1.10.8.10:FF:000012">
    <property type="entry name" value="ATP-dependent protease ATPase subunit HslU"/>
    <property type="match status" value="1"/>
</dbReference>
<dbReference type="FunFam" id="1.10.8.10:FF:000028">
    <property type="entry name" value="ATP-dependent protease ATPase subunit HslU"/>
    <property type="match status" value="1"/>
</dbReference>
<dbReference type="FunFam" id="1.10.8.60:FF:000027">
    <property type="entry name" value="ATP-dependent protease ATPase subunit HslU"/>
    <property type="match status" value="1"/>
</dbReference>
<dbReference type="FunFam" id="3.40.50.300:FF:000213">
    <property type="entry name" value="ATP-dependent protease ATPase subunit HslU"/>
    <property type="match status" value="1"/>
</dbReference>
<dbReference type="FunFam" id="3.40.50.300:FF:000220">
    <property type="entry name" value="ATP-dependent protease ATPase subunit HslU"/>
    <property type="match status" value="1"/>
</dbReference>
<dbReference type="Gene3D" id="1.10.8.60">
    <property type="match status" value="1"/>
</dbReference>
<dbReference type="Gene3D" id="1.10.8.10">
    <property type="entry name" value="DNA helicase RuvA subunit, C-terminal domain"/>
    <property type="match status" value="2"/>
</dbReference>
<dbReference type="Gene3D" id="3.40.50.300">
    <property type="entry name" value="P-loop containing nucleotide triphosphate hydrolases"/>
    <property type="match status" value="1"/>
</dbReference>
<dbReference type="HAMAP" id="MF_00249">
    <property type="entry name" value="HslU"/>
    <property type="match status" value="1"/>
</dbReference>
<dbReference type="InterPro" id="IPR003593">
    <property type="entry name" value="AAA+_ATPase"/>
</dbReference>
<dbReference type="InterPro" id="IPR050052">
    <property type="entry name" value="ATP-dep_Clp_protease_ClpX"/>
</dbReference>
<dbReference type="InterPro" id="IPR003959">
    <property type="entry name" value="ATPase_AAA_core"/>
</dbReference>
<dbReference type="InterPro" id="IPR019489">
    <property type="entry name" value="Clp_ATPase_C"/>
</dbReference>
<dbReference type="InterPro" id="IPR004491">
    <property type="entry name" value="HslU"/>
</dbReference>
<dbReference type="InterPro" id="IPR027417">
    <property type="entry name" value="P-loop_NTPase"/>
</dbReference>
<dbReference type="NCBIfam" id="TIGR00390">
    <property type="entry name" value="hslU"/>
    <property type="match status" value="1"/>
</dbReference>
<dbReference type="NCBIfam" id="NF003544">
    <property type="entry name" value="PRK05201.1"/>
    <property type="match status" value="1"/>
</dbReference>
<dbReference type="PANTHER" id="PTHR48102">
    <property type="entry name" value="ATP-DEPENDENT CLP PROTEASE ATP-BINDING SUBUNIT CLPX-LIKE, MITOCHONDRIAL-RELATED"/>
    <property type="match status" value="1"/>
</dbReference>
<dbReference type="PANTHER" id="PTHR48102:SF3">
    <property type="entry name" value="ATP-DEPENDENT PROTEASE ATPASE SUBUNIT HSLU"/>
    <property type="match status" value="1"/>
</dbReference>
<dbReference type="Pfam" id="PF00004">
    <property type="entry name" value="AAA"/>
    <property type="match status" value="1"/>
</dbReference>
<dbReference type="Pfam" id="PF07724">
    <property type="entry name" value="AAA_2"/>
    <property type="match status" value="1"/>
</dbReference>
<dbReference type="SMART" id="SM00382">
    <property type="entry name" value="AAA"/>
    <property type="match status" value="1"/>
</dbReference>
<dbReference type="SMART" id="SM01086">
    <property type="entry name" value="ClpB_D2-small"/>
    <property type="match status" value="1"/>
</dbReference>
<dbReference type="SUPFAM" id="SSF52540">
    <property type="entry name" value="P-loop containing nucleoside triphosphate hydrolases"/>
    <property type="match status" value="1"/>
</dbReference>
<proteinExistence type="inferred from homology"/>
<organism>
    <name type="scientific">Escherichia coli O17:K52:H18 (strain UMN026 / ExPEC)</name>
    <dbReference type="NCBI Taxonomy" id="585056"/>
    <lineage>
        <taxon>Bacteria</taxon>
        <taxon>Pseudomonadati</taxon>
        <taxon>Pseudomonadota</taxon>
        <taxon>Gammaproteobacteria</taxon>
        <taxon>Enterobacterales</taxon>
        <taxon>Enterobacteriaceae</taxon>
        <taxon>Escherichia</taxon>
    </lineage>
</organism>
<reference key="1">
    <citation type="journal article" date="2009" name="PLoS Genet.">
        <title>Organised genome dynamics in the Escherichia coli species results in highly diverse adaptive paths.</title>
        <authorList>
            <person name="Touchon M."/>
            <person name="Hoede C."/>
            <person name="Tenaillon O."/>
            <person name="Barbe V."/>
            <person name="Baeriswyl S."/>
            <person name="Bidet P."/>
            <person name="Bingen E."/>
            <person name="Bonacorsi S."/>
            <person name="Bouchier C."/>
            <person name="Bouvet O."/>
            <person name="Calteau A."/>
            <person name="Chiapello H."/>
            <person name="Clermont O."/>
            <person name="Cruveiller S."/>
            <person name="Danchin A."/>
            <person name="Diard M."/>
            <person name="Dossat C."/>
            <person name="Karoui M.E."/>
            <person name="Frapy E."/>
            <person name="Garry L."/>
            <person name="Ghigo J.M."/>
            <person name="Gilles A.M."/>
            <person name="Johnson J."/>
            <person name="Le Bouguenec C."/>
            <person name="Lescat M."/>
            <person name="Mangenot S."/>
            <person name="Martinez-Jehanne V."/>
            <person name="Matic I."/>
            <person name="Nassif X."/>
            <person name="Oztas S."/>
            <person name="Petit M.A."/>
            <person name="Pichon C."/>
            <person name="Rouy Z."/>
            <person name="Ruf C.S."/>
            <person name="Schneider D."/>
            <person name="Tourret J."/>
            <person name="Vacherie B."/>
            <person name="Vallenet D."/>
            <person name="Medigue C."/>
            <person name="Rocha E.P.C."/>
            <person name="Denamur E."/>
        </authorList>
    </citation>
    <scope>NUCLEOTIDE SEQUENCE [LARGE SCALE GENOMIC DNA]</scope>
    <source>
        <strain>UMN026 / ExPEC</strain>
    </source>
</reference>
<protein>
    <recommendedName>
        <fullName evidence="1">ATP-dependent protease ATPase subunit HslU</fullName>
    </recommendedName>
    <alternativeName>
        <fullName evidence="1">Heat shock protein HslU</fullName>
    </alternativeName>
    <alternativeName>
        <fullName evidence="1">Unfoldase HslU</fullName>
    </alternativeName>
</protein>
<keyword id="KW-0067">ATP-binding</keyword>
<keyword id="KW-0143">Chaperone</keyword>
<keyword id="KW-0963">Cytoplasm</keyword>
<keyword id="KW-0547">Nucleotide-binding</keyword>
<keyword id="KW-0346">Stress response</keyword>
<accession>B7NFN0</accession>
<comment type="function">
    <text evidence="1">ATPase subunit of a proteasome-like degradation complex; this subunit has chaperone activity. The binding of ATP and its subsequent hydrolysis by HslU are essential for unfolding of protein substrates subsequently hydrolyzed by HslV. HslU recognizes the N-terminal part of its protein substrates and unfolds these before they are guided to HslV for hydrolysis.</text>
</comment>
<comment type="subunit">
    <text evidence="1">A double ring-shaped homohexamer of HslV is capped on each side by a ring-shaped HslU homohexamer. The assembly of the HslU/HslV complex is dependent on binding of ATP.</text>
</comment>
<comment type="subcellular location">
    <subcellularLocation>
        <location evidence="1">Cytoplasm</location>
    </subcellularLocation>
</comment>
<comment type="induction">
    <text evidence="1">By heat shock.</text>
</comment>
<comment type="similarity">
    <text evidence="1">Belongs to the ClpX chaperone family. HslU subfamily.</text>
</comment>